<comment type="function">
    <text evidence="1">Involved in cell wall formation. Catalyzes the final step in the synthesis of UDP-N-acetylmuramoyl-pentapeptide, the precursor of murein.</text>
</comment>
<comment type="catalytic activity">
    <reaction evidence="1">
        <text>D-alanyl-D-alanine + UDP-N-acetyl-alpha-D-muramoyl-L-alanyl-gamma-D-glutamyl-meso-2,6-diaminopimelate + ATP = UDP-N-acetyl-alpha-D-muramoyl-L-alanyl-gamma-D-glutamyl-meso-2,6-diaminopimeloyl-D-alanyl-D-alanine + ADP + phosphate + H(+)</text>
        <dbReference type="Rhea" id="RHEA:28374"/>
        <dbReference type="ChEBI" id="CHEBI:15378"/>
        <dbReference type="ChEBI" id="CHEBI:30616"/>
        <dbReference type="ChEBI" id="CHEBI:43474"/>
        <dbReference type="ChEBI" id="CHEBI:57822"/>
        <dbReference type="ChEBI" id="CHEBI:61386"/>
        <dbReference type="ChEBI" id="CHEBI:83905"/>
        <dbReference type="ChEBI" id="CHEBI:456216"/>
        <dbReference type="EC" id="6.3.2.10"/>
    </reaction>
</comment>
<comment type="pathway">
    <text evidence="1">Cell wall biogenesis; peptidoglycan biosynthesis.</text>
</comment>
<comment type="subcellular location">
    <subcellularLocation>
        <location evidence="1">Cytoplasm</location>
    </subcellularLocation>
</comment>
<comment type="similarity">
    <text evidence="1">Belongs to the MurCDEF family. MurF subfamily.</text>
</comment>
<protein>
    <recommendedName>
        <fullName evidence="1">UDP-N-acetylmuramoyl-tripeptide--D-alanyl-D-alanine ligase</fullName>
        <ecNumber evidence="1">6.3.2.10</ecNumber>
    </recommendedName>
    <alternativeName>
        <fullName evidence="1">D-alanyl-D-alanine-adding enzyme</fullName>
    </alternativeName>
    <alternativeName>
        <fullName>UDP-MurNAc-pentapeptide synthetase</fullName>
    </alternativeName>
</protein>
<evidence type="ECO:0000255" key="1">
    <source>
        <dbReference type="HAMAP-Rule" id="MF_02019"/>
    </source>
</evidence>
<reference key="1">
    <citation type="journal article" date="2003" name="Proc. Natl. Acad. Sci. U.S.A.">
        <title>Reductive genome evolution in Buchnera aphidicola.</title>
        <authorList>
            <person name="van Ham R.C.H.J."/>
            <person name="Kamerbeek J."/>
            <person name="Palacios C."/>
            <person name="Rausell C."/>
            <person name="Abascal F."/>
            <person name="Bastolla U."/>
            <person name="Fernandez J.M."/>
            <person name="Jimenez L."/>
            <person name="Postigo M."/>
            <person name="Silva F.J."/>
            <person name="Tamames J."/>
            <person name="Viguera E."/>
            <person name="Latorre A."/>
            <person name="Valencia A."/>
            <person name="Moran F."/>
            <person name="Moya A."/>
        </authorList>
    </citation>
    <scope>NUCLEOTIDE SEQUENCE [LARGE SCALE GENOMIC DNA]</scope>
    <source>
        <strain>Bp</strain>
    </source>
</reference>
<sequence length="460" mass="51092">MISINLIKLTSITNGILYCSNYATLHSISIHSITTDTRKITPKCLFIALIGKNFDAHMFVNEAISKGAAALLLEKQCYPKNVIPQIIVQNTTIALGKIASWIRDQTNATVIAITGSSGKTSVKEMTSSILKNCGNTISTFQNLNNNIGVPLTLLNLNKSHKYAILELGANYPKDIEYTTKITKPNIALINNIYHSHLAGFKSLFGVAQAKQEIFLGLRKNGIAIYNKDSNYWSKWKKNLLTQKIINFSIKKNSTIFASNITTSNQGSKFKIHSPNGEIYVTLPLLGYHNISNALAAATIAISINIPLEIIKIGLSSLPILKNRLQIIRLNKYKTIINDTYNANTASMIVAIKILENISGYKLFVAGDMLELGKNDVLYHKIIGNTIYNSNINEVFSIGKLSKEISIASKKGHHFYNSDELLKNLKNKLLNKKIITILVKASRSEKLDVIVEQLIKEYHKA</sequence>
<keyword id="KW-0067">ATP-binding</keyword>
<keyword id="KW-0131">Cell cycle</keyword>
<keyword id="KW-0132">Cell division</keyword>
<keyword id="KW-0133">Cell shape</keyword>
<keyword id="KW-0961">Cell wall biogenesis/degradation</keyword>
<keyword id="KW-0963">Cytoplasm</keyword>
<keyword id="KW-0436">Ligase</keyword>
<keyword id="KW-0547">Nucleotide-binding</keyword>
<keyword id="KW-0573">Peptidoglycan synthesis</keyword>
<keyword id="KW-1185">Reference proteome</keyword>
<accession>Q89AQ1</accession>
<gene>
    <name evidence="1" type="primary">murF</name>
    <name type="ordered locus">bbp_202</name>
</gene>
<feature type="chain" id="PRO_0000101697" description="UDP-N-acetylmuramoyl-tripeptide--D-alanyl-D-alanine ligase">
    <location>
        <begin position="1"/>
        <end position="460"/>
    </location>
</feature>
<feature type="binding site" evidence="1">
    <location>
        <begin position="115"/>
        <end position="121"/>
    </location>
    <ligand>
        <name>ATP</name>
        <dbReference type="ChEBI" id="CHEBI:30616"/>
    </ligand>
</feature>
<proteinExistence type="inferred from homology"/>
<organism>
    <name type="scientific">Buchnera aphidicola subsp. Baizongia pistaciae (strain Bp)</name>
    <dbReference type="NCBI Taxonomy" id="224915"/>
    <lineage>
        <taxon>Bacteria</taxon>
        <taxon>Pseudomonadati</taxon>
        <taxon>Pseudomonadota</taxon>
        <taxon>Gammaproteobacteria</taxon>
        <taxon>Enterobacterales</taxon>
        <taxon>Erwiniaceae</taxon>
        <taxon>Buchnera</taxon>
    </lineage>
</organism>
<name>MURF_BUCBP</name>
<dbReference type="EC" id="6.3.2.10" evidence="1"/>
<dbReference type="EMBL" id="AE016826">
    <property type="protein sequence ID" value="AAO26934.1"/>
    <property type="molecule type" value="Genomic_DNA"/>
</dbReference>
<dbReference type="RefSeq" id="WP_011091335.1">
    <property type="nucleotide sequence ID" value="NC_004545.1"/>
</dbReference>
<dbReference type="SMR" id="Q89AQ1"/>
<dbReference type="STRING" id="224915.bbp_202"/>
<dbReference type="KEGG" id="bab:bbp_202"/>
<dbReference type="eggNOG" id="COG0770">
    <property type="taxonomic scope" value="Bacteria"/>
</dbReference>
<dbReference type="HOGENOM" id="CLU_031507_4_0_6"/>
<dbReference type="OrthoDB" id="9801978at2"/>
<dbReference type="UniPathway" id="UPA00219"/>
<dbReference type="Proteomes" id="UP000000601">
    <property type="component" value="Chromosome"/>
</dbReference>
<dbReference type="GO" id="GO:0005737">
    <property type="term" value="C:cytoplasm"/>
    <property type="evidence" value="ECO:0007669"/>
    <property type="project" value="UniProtKB-SubCell"/>
</dbReference>
<dbReference type="GO" id="GO:0005524">
    <property type="term" value="F:ATP binding"/>
    <property type="evidence" value="ECO:0007669"/>
    <property type="project" value="UniProtKB-UniRule"/>
</dbReference>
<dbReference type="GO" id="GO:0047480">
    <property type="term" value="F:UDP-N-acetylmuramoyl-tripeptide-D-alanyl-D-alanine ligase activity"/>
    <property type="evidence" value="ECO:0007669"/>
    <property type="project" value="UniProtKB-UniRule"/>
</dbReference>
<dbReference type="GO" id="GO:0008766">
    <property type="term" value="F:UDP-N-acetylmuramoylalanyl-D-glutamyl-2,6-diaminopimelate-D-alanyl-D-alanine ligase activity"/>
    <property type="evidence" value="ECO:0007669"/>
    <property type="project" value="RHEA"/>
</dbReference>
<dbReference type="GO" id="GO:0051301">
    <property type="term" value="P:cell division"/>
    <property type="evidence" value="ECO:0007669"/>
    <property type="project" value="UniProtKB-KW"/>
</dbReference>
<dbReference type="GO" id="GO:0071555">
    <property type="term" value="P:cell wall organization"/>
    <property type="evidence" value="ECO:0007669"/>
    <property type="project" value="UniProtKB-KW"/>
</dbReference>
<dbReference type="GO" id="GO:0009252">
    <property type="term" value="P:peptidoglycan biosynthetic process"/>
    <property type="evidence" value="ECO:0007669"/>
    <property type="project" value="UniProtKB-UniRule"/>
</dbReference>
<dbReference type="GO" id="GO:0008360">
    <property type="term" value="P:regulation of cell shape"/>
    <property type="evidence" value="ECO:0007669"/>
    <property type="project" value="UniProtKB-KW"/>
</dbReference>
<dbReference type="Gene3D" id="3.90.190.20">
    <property type="entry name" value="Mur ligase, C-terminal domain"/>
    <property type="match status" value="1"/>
</dbReference>
<dbReference type="Gene3D" id="3.40.1190.10">
    <property type="entry name" value="Mur-like, catalytic domain"/>
    <property type="match status" value="1"/>
</dbReference>
<dbReference type="Gene3D" id="3.40.1390.10">
    <property type="entry name" value="MurE/MurF, N-terminal domain"/>
    <property type="match status" value="1"/>
</dbReference>
<dbReference type="HAMAP" id="MF_02019">
    <property type="entry name" value="MurF"/>
    <property type="match status" value="1"/>
</dbReference>
<dbReference type="InterPro" id="IPR036565">
    <property type="entry name" value="Mur-like_cat_sf"/>
</dbReference>
<dbReference type="InterPro" id="IPR004101">
    <property type="entry name" value="Mur_ligase_C"/>
</dbReference>
<dbReference type="InterPro" id="IPR036615">
    <property type="entry name" value="Mur_ligase_C_dom_sf"/>
</dbReference>
<dbReference type="InterPro" id="IPR013221">
    <property type="entry name" value="Mur_ligase_cen"/>
</dbReference>
<dbReference type="InterPro" id="IPR000713">
    <property type="entry name" value="Mur_ligase_N"/>
</dbReference>
<dbReference type="InterPro" id="IPR051046">
    <property type="entry name" value="MurCDEF_CellWall_CoF430Synth"/>
</dbReference>
<dbReference type="InterPro" id="IPR035911">
    <property type="entry name" value="MurE/MurF_N"/>
</dbReference>
<dbReference type="InterPro" id="IPR005863">
    <property type="entry name" value="UDP-N-AcMur_synth"/>
</dbReference>
<dbReference type="NCBIfam" id="TIGR01143">
    <property type="entry name" value="murF"/>
    <property type="match status" value="1"/>
</dbReference>
<dbReference type="PANTHER" id="PTHR43024">
    <property type="entry name" value="UDP-N-ACETYLMURAMOYL-TRIPEPTIDE--D-ALANYL-D-ALANINE LIGASE"/>
    <property type="match status" value="1"/>
</dbReference>
<dbReference type="PANTHER" id="PTHR43024:SF1">
    <property type="entry name" value="UDP-N-ACETYLMURAMOYL-TRIPEPTIDE--D-ALANYL-D-ALANINE LIGASE"/>
    <property type="match status" value="1"/>
</dbReference>
<dbReference type="Pfam" id="PF01225">
    <property type="entry name" value="Mur_ligase"/>
    <property type="match status" value="1"/>
</dbReference>
<dbReference type="Pfam" id="PF02875">
    <property type="entry name" value="Mur_ligase_C"/>
    <property type="match status" value="1"/>
</dbReference>
<dbReference type="Pfam" id="PF08245">
    <property type="entry name" value="Mur_ligase_M"/>
    <property type="match status" value="1"/>
</dbReference>
<dbReference type="SUPFAM" id="SSF53623">
    <property type="entry name" value="MurD-like peptide ligases, catalytic domain"/>
    <property type="match status" value="1"/>
</dbReference>
<dbReference type="SUPFAM" id="SSF53244">
    <property type="entry name" value="MurD-like peptide ligases, peptide-binding domain"/>
    <property type="match status" value="1"/>
</dbReference>
<dbReference type="SUPFAM" id="SSF63418">
    <property type="entry name" value="MurE/MurF N-terminal domain"/>
    <property type="match status" value="1"/>
</dbReference>